<name>THIG_SHIBS</name>
<reference key="1">
    <citation type="journal article" date="2005" name="Nucleic Acids Res.">
        <title>Genome dynamics and diversity of Shigella species, the etiologic agents of bacillary dysentery.</title>
        <authorList>
            <person name="Yang F."/>
            <person name="Yang J."/>
            <person name="Zhang X."/>
            <person name="Chen L."/>
            <person name="Jiang Y."/>
            <person name="Yan Y."/>
            <person name="Tang X."/>
            <person name="Wang J."/>
            <person name="Xiong Z."/>
            <person name="Dong J."/>
            <person name="Xue Y."/>
            <person name="Zhu Y."/>
            <person name="Xu X."/>
            <person name="Sun L."/>
            <person name="Chen S."/>
            <person name="Nie H."/>
            <person name="Peng J."/>
            <person name="Xu J."/>
            <person name="Wang Y."/>
            <person name="Yuan Z."/>
            <person name="Wen Y."/>
            <person name="Yao Z."/>
            <person name="Shen Y."/>
            <person name="Qiang B."/>
            <person name="Hou Y."/>
            <person name="Yu J."/>
            <person name="Jin Q."/>
        </authorList>
    </citation>
    <scope>NUCLEOTIDE SEQUENCE [LARGE SCALE GENOMIC DNA]</scope>
    <source>
        <strain>Sb227</strain>
    </source>
</reference>
<comment type="function">
    <text evidence="1">Catalyzes the rearrangement of 1-deoxy-D-xylulose 5-phosphate (DXP) to produce the thiazole phosphate moiety of thiamine. Sulfur is provided by the thiocarboxylate moiety of the carrier protein ThiS. In vitro, sulfur can be provided by H(2)S.</text>
</comment>
<comment type="catalytic activity">
    <reaction evidence="1">
        <text>[ThiS sulfur-carrier protein]-C-terminal-Gly-aminoethanethioate + 2-iminoacetate + 1-deoxy-D-xylulose 5-phosphate = [ThiS sulfur-carrier protein]-C-terminal Gly-Gly + 2-[(2R,5Z)-2-carboxy-4-methylthiazol-5(2H)-ylidene]ethyl phosphate + 2 H2O + H(+)</text>
        <dbReference type="Rhea" id="RHEA:26297"/>
        <dbReference type="Rhea" id="RHEA-COMP:12909"/>
        <dbReference type="Rhea" id="RHEA-COMP:19908"/>
        <dbReference type="ChEBI" id="CHEBI:15377"/>
        <dbReference type="ChEBI" id="CHEBI:15378"/>
        <dbReference type="ChEBI" id="CHEBI:57792"/>
        <dbReference type="ChEBI" id="CHEBI:62899"/>
        <dbReference type="ChEBI" id="CHEBI:77846"/>
        <dbReference type="ChEBI" id="CHEBI:90778"/>
        <dbReference type="ChEBI" id="CHEBI:232372"/>
        <dbReference type="EC" id="2.8.1.10"/>
    </reaction>
</comment>
<comment type="pathway">
    <text evidence="1">Cofactor biosynthesis; thiamine diphosphate biosynthesis.</text>
</comment>
<comment type="subunit">
    <text evidence="1">Homotetramer. Forms heterodimers with either ThiH or ThiS.</text>
</comment>
<comment type="subcellular location">
    <subcellularLocation>
        <location evidence="1">Cytoplasm</location>
    </subcellularLocation>
</comment>
<comment type="similarity">
    <text evidence="1">Belongs to the ThiG family.</text>
</comment>
<protein>
    <recommendedName>
        <fullName evidence="1">Thiazole synthase</fullName>
        <ecNumber evidence="1">2.8.1.10</ecNumber>
    </recommendedName>
</protein>
<keyword id="KW-0963">Cytoplasm</keyword>
<keyword id="KW-0704">Schiff base</keyword>
<keyword id="KW-0784">Thiamine biosynthesis</keyword>
<keyword id="KW-0808">Transferase</keyword>
<evidence type="ECO:0000255" key="1">
    <source>
        <dbReference type="HAMAP-Rule" id="MF_00443"/>
    </source>
</evidence>
<accession>Q31U06</accession>
<sequence>MLRIADKTFDSHLFTGTGKFASSQLMVEAIRASGSQLVTLAMKRVDLRQHNDAILEPLIAAGVTLLPNTSGAKTAEEAIFAAHLAREALGTNWLKLEIHPDARWLLPDPIETLKAAEMLVQQGFVVLPYCGADPVLCKRLEEVGCAAVMPLGAPIGSNQGLETRAMLEIIIQQATVPVVVDAGIGVPSHAAQALEMGADAVLVNTAIAVADDPVNMAKAFRLAVEAGLLARQSGPGSRSHFAHATSPLTGFLEASA</sequence>
<proteinExistence type="inferred from homology"/>
<gene>
    <name evidence="1" type="primary">thiG</name>
    <name type="ordered locus">SBO_4011</name>
</gene>
<organism>
    <name type="scientific">Shigella boydii serotype 4 (strain Sb227)</name>
    <dbReference type="NCBI Taxonomy" id="300268"/>
    <lineage>
        <taxon>Bacteria</taxon>
        <taxon>Pseudomonadati</taxon>
        <taxon>Pseudomonadota</taxon>
        <taxon>Gammaproteobacteria</taxon>
        <taxon>Enterobacterales</taxon>
        <taxon>Enterobacteriaceae</taxon>
        <taxon>Shigella</taxon>
    </lineage>
</organism>
<dbReference type="EC" id="2.8.1.10" evidence="1"/>
<dbReference type="EMBL" id="CP000036">
    <property type="protein sequence ID" value="ABB68452.1"/>
    <property type="molecule type" value="Genomic_DNA"/>
</dbReference>
<dbReference type="RefSeq" id="WP_000944094.1">
    <property type="nucleotide sequence ID" value="NC_007613.1"/>
</dbReference>
<dbReference type="SMR" id="Q31U06"/>
<dbReference type="GeneID" id="93777904"/>
<dbReference type="KEGG" id="sbo:SBO_4011"/>
<dbReference type="HOGENOM" id="CLU_062233_1_0_6"/>
<dbReference type="UniPathway" id="UPA00060"/>
<dbReference type="Proteomes" id="UP000007067">
    <property type="component" value="Chromosome"/>
</dbReference>
<dbReference type="GO" id="GO:0005737">
    <property type="term" value="C:cytoplasm"/>
    <property type="evidence" value="ECO:0007669"/>
    <property type="project" value="UniProtKB-SubCell"/>
</dbReference>
<dbReference type="GO" id="GO:1990107">
    <property type="term" value="F:thiazole synthase activity"/>
    <property type="evidence" value="ECO:0007669"/>
    <property type="project" value="UniProtKB-EC"/>
</dbReference>
<dbReference type="GO" id="GO:0009229">
    <property type="term" value="P:thiamine diphosphate biosynthetic process"/>
    <property type="evidence" value="ECO:0007669"/>
    <property type="project" value="UniProtKB-UniRule"/>
</dbReference>
<dbReference type="CDD" id="cd04728">
    <property type="entry name" value="ThiG"/>
    <property type="match status" value="1"/>
</dbReference>
<dbReference type="FunFam" id="3.20.20.70:FF:000049">
    <property type="entry name" value="Thiazole synthase"/>
    <property type="match status" value="1"/>
</dbReference>
<dbReference type="Gene3D" id="3.20.20.70">
    <property type="entry name" value="Aldolase class I"/>
    <property type="match status" value="1"/>
</dbReference>
<dbReference type="HAMAP" id="MF_00443">
    <property type="entry name" value="ThiG"/>
    <property type="match status" value="1"/>
</dbReference>
<dbReference type="InterPro" id="IPR013785">
    <property type="entry name" value="Aldolase_TIM"/>
</dbReference>
<dbReference type="InterPro" id="IPR033983">
    <property type="entry name" value="Thiazole_synthase_ThiG"/>
</dbReference>
<dbReference type="InterPro" id="IPR008867">
    <property type="entry name" value="ThiG"/>
</dbReference>
<dbReference type="PANTHER" id="PTHR34266">
    <property type="entry name" value="THIAZOLE SYNTHASE"/>
    <property type="match status" value="1"/>
</dbReference>
<dbReference type="PANTHER" id="PTHR34266:SF2">
    <property type="entry name" value="THIAZOLE SYNTHASE"/>
    <property type="match status" value="1"/>
</dbReference>
<dbReference type="Pfam" id="PF05690">
    <property type="entry name" value="ThiG"/>
    <property type="match status" value="1"/>
</dbReference>
<dbReference type="SUPFAM" id="SSF110399">
    <property type="entry name" value="ThiG-like"/>
    <property type="match status" value="1"/>
</dbReference>
<feature type="chain" id="PRO_0000236364" description="Thiazole synthase">
    <location>
        <begin position="1"/>
        <end position="256"/>
    </location>
</feature>
<feature type="active site" description="Schiff-base intermediate with DXP" evidence="1">
    <location>
        <position position="95"/>
    </location>
</feature>
<feature type="binding site" evidence="1">
    <location>
        <position position="156"/>
    </location>
    <ligand>
        <name>1-deoxy-D-xylulose 5-phosphate</name>
        <dbReference type="ChEBI" id="CHEBI:57792"/>
    </ligand>
</feature>
<feature type="binding site" evidence="1">
    <location>
        <begin position="182"/>
        <end position="183"/>
    </location>
    <ligand>
        <name>1-deoxy-D-xylulose 5-phosphate</name>
        <dbReference type="ChEBI" id="CHEBI:57792"/>
    </ligand>
</feature>
<feature type="binding site" evidence="1">
    <location>
        <begin position="204"/>
        <end position="205"/>
    </location>
    <ligand>
        <name>1-deoxy-D-xylulose 5-phosphate</name>
        <dbReference type="ChEBI" id="CHEBI:57792"/>
    </ligand>
</feature>